<organism>
    <name type="scientific">Micrurus nigrocinctus</name>
    <name type="common">Central American coral snake</name>
    <name type="synonym">Gargantilla</name>
    <dbReference type="NCBI Taxonomy" id="8635"/>
    <lineage>
        <taxon>Eukaryota</taxon>
        <taxon>Metazoa</taxon>
        <taxon>Chordata</taxon>
        <taxon>Craniata</taxon>
        <taxon>Vertebrata</taxon>
        <taxon>Euteleostomi</taxon>
        <taxon>Lepidosauria</taxon>
        <taxon>Squamata</taxon>
        <taxon>Bifurcata</taxon>
        <taxon>Unidentata</taxon>
        <taxon>Episquamata</taxon>
        <taxon>Toxicofera</taxon>
        <taxon>Serpentes</taxon>
        <taxon>Colubroidea</taxon>
        <taxon>Elapidae</taxon>
        <taxon>Elapinae</taxon>
        <taxon>Micrurus</taxon>
    </lineage>
</organism>
<comment type="function">
    <text evidence="2">Binds and may inhibit nicotinic acetylcholine receptors (nAChR).</text>
</comment>
<comment type="subcellular location">
    <subcellularLocation>
        <location evidence="2">Secreted</location>
    </subcellularLocation>
</comment>
<comment type="tissue specificity">
    <text evidence="4">Expressed by the venom gland.</text>
</comment>
<comment type="similarity">
    <text evidence="4">Belongs to the three-finger toxin family. Short-chain subfamily.</text>
</comment>
<name>3SX1_MICNI</name>
<keyword id="KW-0008">Acetylcholine receptor inhibiting toxin</keyword>
<keyword id="KW-0903">Direct protein sequencing</keyword>
<keyword id="KW-1015">Disulfide bond</keyword>
<keyword id="KW-0872">Ion channel impairing toxin</keyword>
<keyword id="KW-0528">Neurotoxin</keyword>
<keyword id="KW-0629">Postsynaptic neurotoxin</keyword>
<keyword id="KW-0964">Secreted</keyword>
<keyword id="KW-0800">Toxin</keyword>
<accession>Q9PRQ2</accession>
<sequence>SKCRIGKDGFYSVTCTEKENLCFTQF</sequence>
<evidence type="ECO:0000250" key="1">
    <source>
        <dbReference type="UniProtKB" id="P60301"/>
    </source>
</evidence>
<evidence type="ECO:0000269" key="2">
    <source>
    </source>
</evidence>
<evidence type="ECO:0000303" key="3">
    <source>
    </source>
</evidence>
<evidence type="ECO:0000305" key="4"/>
<protein>
    <recommendedName>
        <fullName evidence="3">Nicotinic acetylcholine receptor-binding protein Mnn-1A</fullName>
    </recommendedName>
    <alternativeName>
        <fullName>Three-finger toxin</fullName>
        <shortName>3FTx</shortName>
    </alternativeName>
</protein>
<reference key="1">
    <citation type="journal article" date="1996" name="FEBS Lett.">
        <title>Characterization of multiple nicotinic acetylcholine receptor-binding proteins and phospholipases A2 from the venom of the coral snake Micrurus nigrocinctus.</title>
        <authorList>
            <person name="Alape-Giron A."/>
            <person name="Persson B."/>
            <person name="Cedelund E."/>
            <person name="Flores-Diaz M."/>
            <person name="Gutierrez J.-M."/>
            <person name="Thelestam M."/>
            <person name="Bergman T."/>
            <person name="Joernvall H."/>
        </authorList>
    </citation>
    <scope>PROTEIN SEQUENCE</scope>
    <scope>FUNCTION</scope>
    <scope>SUBCELLULAR LOCATION</scope>
    <source>
        <tissue>Venom</tissue>
    </source>
</reference>
<feature type="chain" id="PRO_0000408023" description="Nicotinic acetylcholine receptor-binding protein Mnn-1A" evidence="2">
    <location>
        <begin position="1"/>
        <end position="26" status="greater than"/>
    </location>
</feature>
<feature type="disulfide bond" evidence="1">
    <location>
        <begin position="3"/>
        <end position="22"/>
    </location>
</feature>
<feature type="unsure residue" description="Assigned by comparison with orthologs">
    <location>
        <position position="3"/>
    </location>
</feature>
<feature type="unsure residue" description="Assigned by comparison with orthologs">
    <location>
        <position position="15"/>
    </location>
</feature>
<feature type="unsure residue" description="Assigned by comparison with orthologs">
    <location>
        <position position="22"/>
    </location>
</feature>
<feature type="non-terminal residue">
    <location>
        <position position="26"/>
    </location>
</feature>
<proteinExistence type="evidence at protein level"/>
<dbReference type="PIR" id="S68644">
    <property type="entry name" value="S68644"/>
</dbReference>
<dbReference type="GO" id="GO:0005576">
    <property type="term" value="C:extracellular region"/>
    <property type="evidence" value="ECO:0007669"/>
    <property type="project" value="UniProtKB-SubCell"/>
</dbReference>
<dbReference type="GO" id="GO:0030550">
    <property type="term" value="F:acetylcholine receptor inhibitor activity"/>
    <property type="evidence" value="ECO:0007669"/>
    <property type="project" value="UniProtKB-KW"/>
</dbReference>
<dbReference type="GO" id="GO:0099106">
    <property type="term" value="F:ion channel regulator activity"/>
    <property type="evidence" value="ECO:0007669"/>
    <property type="project" value="UniProtKB-KW"/>
</dbReference>
<dbReference type="GO" id="GO:0090729">
    <property type="term" value="F:toxin activity"/>
    <property type="evidence" value="ECO:0007669"/>
    <property type="project" value="UniProtKB-KW"/>
</dbReference>